<sequence>MIKSILDNDLYKFTMQMAVLELFPKAEAEYRFTNRGSHHFSEEFVEKLRRVIDEDISALMLTEDEYQWLGENCSFLKPMYLEYLKNFRFKPGEVEVCLTEEKELDIRIKGPWHSTILWEIVLMAAVSELYFTTIEKEWNGKEWDGNISATSESILTAYGEKILEIGKILEENGCLFAEFGTRRRRSFELHDQVMKTLLQIETLTGTSNVFFAKKYGLKPIGTVGHEWIMGTSALIGLRYANRFAFENWVEVYKGDLGIALTDTFGSEAFFKDMDLKLSKIYDGFRHDSGDPFTFVDRVIDHYRKMGIDPMKKVIVFSDALNAEAAIRLKKYCQDKINCSFGIGTSLTNNSEFFRESPPLNMVIKLHSVNGIPVVKLSDSPEKETGERDALRVANYIVGRKGLDE</sequence>
<dbReference type="EC" id="6.3.4.21" evidence="1"/>
<dbReference type="EMBL" id="AE010299">
    <property type="protein sequence ID" value="AAM05916.1"/>
    <property type="molecule type" value="Genomic_DNA"/>
</dbReference>
<dbReference type="RefSeq" id="WP_011022501.1">
    <property type="nucleotide sequence ID" value="NC_003552.1"/>
</dbReference>
<dbReference type="SMR" id="Q8TMW6"/>
<dbReference type="STRING" id="188937.MA_2533"/>
<dbReference type="EnsemblBacteria" id="AAM05916">
    <property type="protein sequence ID" value="AAM05916"/>
    <property type="gene ID" value="MA_2533"/>
</dbReference>
<dbReference type="GeneID" id="1474422"/>
<dbReference type="KEGG" id="mac:MA_2533"/>
<dbReference type="HOGENOM" id="CLU_030991_0_0_2"/>
<dbReference type="InParanoid" id="Q8TMW6"/>
<dbReference type="OrthoDB" id="131109at2157"/>
<dbReference type="PhylomeDB" id="Q8TMW6"/>
<dbReference type="UniPathway" id="UPA00253">
    <property type="reaction ID" value="UER00457"/>
</dbReference>
<dbReference type="Proteomes" id="UP000002487">
    <property type="component" value="Chromosome"/>
</dbReference>
<dbReference type="GO" id="GO:0005829">
    <property type="term" value="C:cytosol"/>
    <property type="evidence" value="ECO:0000318"/>
    <property type="project" value="GO_Central"/>
</dbReference>
<dbReference type="GO" id="GO:0004516">
    <property type="term" value="F:nicotinate phosphoribosyltransferase activity"/>
    <property type="evidence" value="ECO:0000318"/>
    <property type="project" value="GO_Central"/>
</dbReference>
<dbReference type="GO" id="GO:0034355">
    <property type="term" value="P:NAD biosynthetic process via the salvage pathway"/>
    <property type="evidence" value="ECO:0000318"/>
    <property type="project" value="GO_Central"/>
</dbReference>
<dbReference type="CDD" id="cd01401">
    <property type="entry name" value="PncB_like"/>
    <property type="match status" value="1"/>
</dbReference>
<dbReference type="Gene3D" id="3.20.140.10">
    <property type="entry name" value="nicotinate phosphoribosyltransferase"/>
    <property type="match status" value="1"/>
</dbReference>
<dbReference type="HAMAP" id="MF_00570">
    <property type="entry name" value="NAPRTase"/>
    <property type="match status" value="1"/>
</dbReference>
<dbReference type="InterPro" id="IPR041525">
    <property type="entry name" value="N/Namide_PRibTrfase"/>
</dbReference>
<dbReference type="InterPro" id="IPR040727">
    <property type="entry name" value="NAPRTase_N"/>
</dbReference>
<dbReference type="InterPro" id="IPR006406">
    <property type="entry name" value="Nic_PRibTrfase"/>
</dbReference>
<dbReference type="InterPro" id="IPR007229">
    <property type="entry name" value="Nic_PRibTrfase-Fam"/>
</dbReference>
<dbReference type="InterPro" id="IPR036068">
    <property type="entry name" value="Nicotinate_pribotase-like_C"/>
</dbReference>
<dbReference type="NCBIfam" id="TIGR01514">
    <property type="entry name" value="NAPRTase"/>
    <property type="match status" value="1"/>
</dbReference>
<dbReference type="NCBIfam" id="NF003704">
    <property type="entry name" value="PRK05321.1"/>
    <property type="match status" value="1"/>
</dbReference>
<dbReference type="PANTHER" id="PTHR11098">
    <property type="entry name" value="NICOTINATE PHOSPHORIBOSYLTRANSFERASE"/>
    <property type="match status" value="1"/>
</dbReference>
<dbReference type="PANTHER" id="PTHR11098:SF1">
    <property type="entry name" value="NICOTINATE PHOSPHORIBOSYLTRANSFERASE"/>
    <property type="match status" value="1"/>
</dbReference>
<dbReference type="Pfam" id="PF04095">
    <property type="entry name" value="NAPRTase"/>
    <property type="match status" value="1"/>
</dbReference>
<dbReference type="Pfam" id="PF17767">
    <property type="entry name" value="NAPRTase_N"/>
    <property type="match status" value="1"/>
</dbReference>
<dbReference type="PIRSF" id="PIRSF000484">
    <property type="entry name" value="NAPRT"/>
    <property type="match status" value="1"/>
</dbReference>
<dbReference type="SUPFAM" id="SSF51690">
    <property type="entry name" value="Nicotinate/Quinolinate PRTase C-terminal domain-like"/>
    <property type="match status" value="1"/>
</dbReference>
<dbReference type="SUPFAM" id="SSF54675">
    <property type="entry name" value="Nicotinate/Quinolinate PRTase N-terminal domain-like"/>
    <property type="match status" value="1"/>
</dbReference>
<evidence type="ECO:0000255" key="1">
    <source>
        <dbReference type="HAMAP-Rule" id="MF_00570"/>
    </source>
</evidence>
<feature type="chain" id="PRO_0000205857" description="Nicotinate phosphoribosyltransferase">
    <location>
        <begin position="1"/>
        <end position="404"/>
    </location>
</feature>
<feature type="modified residue" description="Phosphohistidine; by autocatalysis" evidence="1">
    <location>
        <position position="225"/>
    </location>
</feature>
<comment type="function">
    <text evidence="1">Catalyzes the synthesis of beta-nicotinate D-ribonucleotide from nicotinate and 5-phospho-D-ribose 1-phosphate at the expense of ATP.</text>
</comment>
<comment type="catalytic activity">
    <reaction evidence="1">
        <text>nicotinate + 5-phospho-alpha-D-ribose 1-diphosphate + ATP + H2O = nicotinate beta-D-ribonucleotide + ADP + phosphate + diphosphate</text>
        <dbReference type="Rhea" id="RHEA:36163"/>
        <dbReference type="ChEBI" id="CHEBI:15377"/>
        <dbReference type="ChEBI" id="CHEBI:30616"/>
        <dbReference type="ChEBI" id="CHEBI:32544"/>
        <dbReference type="ChEBI" id="CHEBI:33019"/>
        <dbReference type="ChEBI" id="CHEBI:43474"/>
        <dbReference type="ChEBI" id="CHEBI:57502"/>
        <dbReference type="ChEBI" id="CHEBI:58017"/>
        <dbReference type="ChEBI" id="CHEBI:456216"/>
        <dbReference type="EC" id="6.3.4.21"/>
    </reaction>
</comment>
<comment type="pathway">
    <text evidence="1">Cofactor biosynthesis; NAD(+) biosynthesis; nicotinate D-ribonucleotide from nicotinate: step 1/1.</text>
</comment>
<comment type="PTM">
    <text evidence="1">Transiently phosphorylated on a His residue during the reaction cycle. Phosphorylation strongly increases the affinity for substrates and increases the rate of nicotinate D-ribonucleotide production. Dephosphorylation regenerates the low-affinity form of the enzyme, leading to product release.</text>
</comment>
<comment type="similarity">
    <text evidence="1">Belongs to the NAPRTase family.</text>
</comment>
<name>PNCB_METAC</name>
<keyword id="KW-0436">Ligase</keyword>
<keyword id="KW-0597">Phosphoprotein</keyword>
<keyword id="KW-0662">Pyridine nucleotide biosynthesis</keyword>
<keyword id="KW-1185">Reference proteome</keyword>
<accession>Q8TMW6</accession>
<proteinExistence type="inferred from homology"/>
<reference key="1">
    <citation type="journal article" date="2002" name="Genome Res.">
        <title>The genome of Methanosarcina acetivorans reveals extensive metabolic and physiological diversity.</title>
        <authorList>
            <person name="Galagan J.E."/>
            <person name="Nusbaum C."/>
            <person name="Roy A."/>
            <person name="Endrizzi M.G."/>
            <person name="Macdonald P."/>
            <person name="FitzHugh W."/>
            <person name="Calvo S."/>
            <person name="Engels R."/>
            <person name="Smirnov S."/>
            <person name="Atnoor D."/>
            <person name="Brown A."/>
            <person name="Allen N."/>
            <person name="Naylor J."/>
            <person name="Stange-Thomann N."/>
            <person name="DeArellano K."/>
            <person name="Johnson R."/>
            <person name="Linton L."/>
            <person name="McEwan P."/>
            <person name="McKernan K."/>
            <person name="Talamas J."/>
            <person name="Tirrell A."/>
            <person name="Ye W."/>
            <person name="Zimmer A."/>
            <person name="Barber R.D."/>
            <person name="Cann I."/>
            <person name="Graham D.E."/>
            <person name="Grahame D.A."/>
            <person name="Guss A.M."/>
            <person name="Hedderich R."/>
            <person name="Ingram-Smith C."/>
            <person name="Kuettner H.C."/>
            <person name="Krzycki J.A."/>
            <person name="Leigh J.A."/>
            <person name="Li W."/>
            <person name="Liu J."/>
            <person name="Mukhopadhyay B."/>
            <person name="Reeve J.N."/>
            <person name="Smith K."/>
            <person name="Springer T.A."/>
            <person name="Umayam L.A."/>
            <person name="White O."/>
            <person name="White R.H."/>
            <person name="de Macario E.C."/>
            <person name="Ferry J.G."/>
            <person name="Jarrell K.F."/>
            <person name="Jing H."/>
            <person name="Macario A.J.L."/>
            <person name="Paulsen I.T."/>
            <person name="Pritchett M."/>
            <person name="Sowers K.R."/>
            <person name="Swanson R.V."/>
            <person name="Zinder S.H."/>
            <person name="Lander E."/>
            <person name="Metcalf W.W."/>
            <person name="Birren B."/>
        </authorList>
    </citation>
    <scope>NUCLEOTIDE SEQUENCE [LARGE SCALE GENOMIC DNA]</scope>
    <source>
        <strain>ATCC 35395 / DSM 2834 / JCM 12185 / C2A</strain>
    </source>
</reference>
<organism>
    <name type="scientific">Methanosarcina acetivorans (strain ATCC 35395 / DSM 2834 / JCM 12185 / C2A)</name>
    <dbReference type="NCBI Taxonomy" id="188937"/>
    <lineage>
        <taxon>Archaea</taxon>
        <taxon>Methanobacteriati</taxon>
        <taxon>Methanobacteriota</taxon>
        <taxon>Stenosarchaea group</taxon>
        <taxon>Methanomicrobia</taxon>
        <taxon>Methanosarcinales</taxon>
        <taxon>Methanosarcinaceae</taxon>
        <taxon>Methanosarcina</taxon>
    </lineage>
</organism>
<gene>
    <name evidence="1" type="primary">pncB</name>
    <name type="ordered locus">MA_2533</name>
</gene>
<protein>
    <recommendedName>
        <fullName evidence="1">Nicotinate phosphoribosyltransferase</fullName>
        <shortName evidence="1">NAPRTase</shortName>
        <ecNumber evidence="1">6.3.4.21</ecNumber>
    </recommendedName>
</protein>